<name>COXX_CHLAA</name>
<proteinExistence type="inferred from homology"/>
<reference key="1">
    <citation type="journal article" date="2011" name="BMC Genomics">
        <title>Complete genome sequence of the filamentous anoxygenic phototrophic bacterium Chloroflexus aurantiacus.</title>
        <authorList>
            <person name="Tang K.H."/>
            <person name="Barry K."/>
            <person name="Chertkov O."/>
            <person name="Dalin E."/>
            <person name="Han C.S."/>
            <person name="Hauser L.J."/>
            <person name="Honchak B.M."/>
            <person name="Karbach L.E."/>
            <person name="Land M.L."/>
            <person name="Lapidus A."/>
            <person name="Larimer F.W."/>
            <person name="Mikhailova N."/>
            <person name="Pitluck S."/>
            <person name="Pierson B.K."/>
            <person name="Blankenship R.E."/>
        </authorList>
    </citation>
    <scope>NUCLEOTIDE SEQUENCE [LARGE SCALE GENOMIC DNA]</scope>
    <source>
        <strain>ATCC 29366 / DSM 635 / J-10-fl</strain>
    </source>
</reference>
<sequence length="587" mass="62574">MAARSLMRILLVGLGLTLATIISGALVTISASATVCSSWPLCLEELVQSQNPLVWISLLHRLFVALALLAVFAGLVAVWRSSDTAGLPRITAGIAAAFFLLQALAGALLVWGVPAMVADVWHLSGALLAFGAQSLTIALIAVPTPATPERLAGRAAQMQRRLRSLAWWSAAAAGVAALAIGARSVVPGFGMMTAVPTNSVSAVGFAALLSVWMALEARRRLRPVAETPALALALPRYSLFLPALALLALLGAFIPVAGHLISLTAIALLWAATIIAAVILQRVPFSFATATAGVRSQPAWRTVVADYISLTKPKVISLLLVTTLTTMFITEAGLPSWWLVIWTMIGGYLAAGGAGAINCAFDSDIDINMGRTSRRPVPSGRISRRAAFIFGLILSVLSIIVLWVFTTPLAAFFALLGIIYYAWFYTGWLKRSTWQNIIIGGGAGAIPPLVGWTAVTGSVSLMAVVLFAIIFYWTPPHFWALALVKQKDYARAGVPMLPVVAGEAETRWQILVYSAIMVAVSLLPVAIGAMSWIYLIGAVVLGLRFMRDAWAVWRVGDQAAIWGLYKYSLLYLALVFAAMVADRLIIG</sequence>
<protein>
    <recommendedName>
        <fullName>Protoheme IX farnesyltransferase</fullName>
        <ecNumber>2.5.1.141</ecNumber>
    </recommendedName>
    <alternativeName>
        <fullName>Heme B farnesyltransferase</fullName>
    </alternativeName>
    <alternativeName>
        <fullName>Heme O synthase</fullName>
    </alternativeName>
</protein>
<evidence type="ECO:0000250" key="1"/>
<evidence type="ECO:0000255" key="2"/>
<evidence type="ECO:0000305" key="3"/>
<accession>A9WAQ6</accession>
<keyword id="KW-1003">Cell membrane</keyword>
<keyword id="KW-0350">Heme biosynthesis</keyword>
<keyword id="KW-0472">Membrane</keyword>
<keyword id="KW-1185">Reference proteome</keyword>
<keyword id="KW-0808">Transferase</keyword>
<keyword id="KW-0812">Transmembrane</keyword>
<keyword id="KW-1133">Transmembrane helix</keyword>
<organism>
    <name type="scientific">Chloroflexus aurantiacus (strain ATCC 29366 / DSM 635 / J-10-fl)</name>
    <dbReference type="NCBI Taxonomy" id="324602"/>
    <lineage>
        <taxon>Bacteria</taxon>
        <taxon>Bacillati</taxon>
        <taxon>Chloroflexota</taxon>
        <taxon>Chloroflexia</taxon>
        <taxon>Chloroflexales</taxon>
        <taxon>Chloroflexineae</taxon>
        <taxon>Chloroflexaceae</taxon>
        <taxon>Chloroflexus</taxon>
    </lineage>
</organism>
<dbReference type="EC" id="2.5.1.141"/>
<dbReference type="EMBL" id="CP000909">
    <property type="protein sequence ID" value="ABY33284.1"/>
    <property type="molecule type" value="Genomic_DNA"/>
</dbReference>
<dbReference type="RefSeq" id="WP_012255940.1">
    <property type="nucleotide sequence ID" value="NC_010175.1"/>
</dbReference>
<dbReference type="RefSeq" id="YP_001633673.1">
    <property type="nucleotide sequence ID" value="NC_010175.1"/>
</dbReference>
<dbReference type="SMR" id="A9WAQ6"/>
<dbReference type="STRING" id="324602.Caur_0029"/>
<dbReference type="EnsemblBacteria" id="ABY33284">
    <property type="protein sequence ID" value="ABY33284"/>
    <property type="gene ID" value="Caur_0029"/>
</dbReference>
<dbReference type="KEGG" id="cau:Caur_0029"/>
<dbReference type="PATRIC" id="fig|324602.8.peg.32"/>
<dbReference type="eggNOG" id="COG0109">
    <property type="taxonomic scope" value="Bacteria"/>
</dbReference>
<dbReference type="HOGENOM" id="CLU_030009_1_0_0"/>
<dbReference type="InParanoid" id="A9WAQ6"/>
<dbReference type="UniPathway" id="UPA00834">
    <property type="reaction ID" value="UER00712"/>
</dbReference>
<dbReference type="Proteomes" id="UP000002008">
    <property type="component" value="Chromosome"/>
</dbReference>
<dbReference type="GO" id="GO:0005886">
    <property type="term" value="C:plasma membrane"/>
    <property type="evidence" value="ECO:0007669"/>
    <property type="project" value="UniProtKB-SubCell"/>
</dbReference>
<dbReference type="GO" id="GO:0016653">
    <property type="term" value="F:oxidoreductase activity, acting on NAD(P)H, heme protein as acceptor"/>
    <property type="evidence" value="ECO:0007669"/>
    <property type="project" value="InterPro"/>
</dbReference>
<dbReference type="GO" id="GO:0008495">
    <property type="term" value="F:protoheme IX farnesyltransferase activity"/>
    <property type="evidence" value="ECO:0000318"/>
    <property type="project" value="GO_Central"/>
</dbReference>
<dbReference type="GO" id="GO:0006784">
    <property type="term" value="P:heme A biosynthetic process"/>
    <property type="evidence" value="ECO:0007669"/>
    <property type="project" value="InterPro"/>
</dbReference>
<dbReference type="GO" id="GO:0006783">
    <property type="term" value="P:heme biosynthetic process"/>
    <property type="evidence" value="ECO:0000318"/>
    <property type="project" value="GO_Central"/>
</dbReference>
<dbReference type="GO" id="GO:0048034">
    <property type="term" value="P:heme O biosynthetic process"/>
    <property type="evidence" value="ECO:0007669"/>
    <property type="project" value="UniProtKB-UniRule"/>
</dbReference>
<dbReference type="CDD" id="cd13957">
    <property type="entry name" value="PT_UbiA_Cox10"/>
    <property type="match status" value="1"/>
</dbReference>
<dbReference type="FunFam" id="1.10.357.140:FF:000001">
    <property type="entry name" value="Protoheme IX farnesyltransferase"/>
    <property type="match status" value="1"/>
</dbReference>
<dbReference type="Gene3D" id="1.10.357.140">
    <property type="entry name" value="UbiA prenyltransferase"/>
    <property type="match status" value="1"/>
</dbReference>
<dbReference type="HAMAP" id="MF_00154">
    <property type="entry name" value="CyoE_CtaB"/>
    <property type="match status" value="1"/>
</dbReference>
<dbReference type="InterPro" id="IPR003780">
    <property type="entry name" value="COX15/CtaA_fam"/>
</dbReference>
<dbReference type="InterPro" id="IPR006369">
    <property type="entry name" value="Protohaem_IX_farnesylTrfase"/>
</dbReference>
<dbReference type="InterPro" id="IPR000537">
    <property type="entry name" value="UbiA_prenyltransferase"/>
</dbReference>
<dbReference type="InterPro" id="IPR030470">
    <property type="entry name" value="UbiA_prenylTrfase_CS"/>
</dbReference>
<dbReference type="InterPro" id="IPR044878">
    <property type="entry name" value="UbiA_sf"/>
</dbReference>
<dbReference type="NCBIfam" id="TIGR01473">
    <property type="entry name" value="cyoE_ctaB"/>
    <property type="match status" value="1"/>
</dbReference>
<dbReference type="NCBIfam" id="NF003349">
    <property type="entry name" value="PRK04375.1-2"/>
    <property type="match status" value="1"/>
</dbReference>
<dbReference type="PANTHER" id="PTHR43448:SF7">
    <property type="entry name" value="4-HYDROXYBENZOATE SOLANESYLTRANSFERASE"/>
    <property type="match status" value="1"/>
</dbReference>
<dbReference type="PANTHER" id="PTHR43448">
    <property type="entry name" value="PROTOHEME IX FARNESYLTRANSFERASE, MITOCHONDRIAL"/>
    <property type="match status" value="1"/>
</dbReference>
<dbReference type="Pfam" id="PF02628">
    <property type="entry name" value="COX15-CtaA"/>
    <property type="match status" value="1"/>
</dbReference>
<dbReference type="Pfam" id="PF01040">
    <property type="entry name" value="UbiA"/>
    <property type="match status" value="1"/>
</dbReference>
<dbReference type="PROSITE" id="PS00943">
    <property type="entry name" value="UBIA"/>
    <property type="match status" value="1"/>
</dbReference>
<feature type="chain" id="PRO_0000346080" description="Protoheme IX farnesyltransferase">
    <location>
        <begin position="1"/>
        <end position="587"/>
    </location>
</feature>
<feature type="transmembrane region" description="Helical" evidence="2">
    <location>
        <begin position="9"/>
        <end position="29"/>
    </location>
</feature>
<feature type="transmembrane region" description="Helical" evidence="2">
    <location>
        <begin position="58"/>
        <end position="78"/>
    </location>
</feature>
<feature type="transmembrane region" description="Helical" evidence="2">
    <location>
        <begin position="93"/>
        <end position="113"/>
    </location>
</feature>
<feature type="transmembrane region" description="Helical" evidence="2">
    <location>
        <begin position="123"/>
        <end position="143"/>
    </location>
</feature>
<feature type="transmembrane region" description="Helical" evidence="2">
    <location>
        <begin position="172"/>
        <end position="192"/>
    </location>
</feature>
<feature type="transmembrane region" description="Helical" evidence="2">
    <location>
        <begin position="195"/>
        <end position="215"/>
    </location>
</feature>
<feature type="transmembrane region" description="Helical" evidence="2">
    <location>
        <begin position="238"/>
        <end position="258"/>
    </location>
</feature>
<feature type="transmembrane region" description="Helical" evidence="2">
    <location>
        <begin position="260"/>
        <end position="280"/>
    </location>
</feature>
<feature type="transmembrane region" description="Helical" evidence="2">
    <location>
        <begin position="315"/>
        <end position="335"/>
    </location>
</feature>
<feature type="transmembrane region" description="Helical" evidence="2">
    <location>
        <begin position="337"/>
        <end position="357"/>
    </location>
</feature>
<feature type="transmembrane region" description="Helical" evidence="2">
    <location>
        <begin position="386"/>
        <end position="406"/>
    </location>
</feature>
<feature type="transmembrane region" description="Helical" evidence="2">
    <location>
        <begin position="409"/>
        <end position="429"/>
    </location>
</feature>
<feature type="transmembrane region" description="Helical" evidence="2">
    <location>
        <begin position="437"/>
        <end position="457"/>
    </location>
</feature>
<feature type="transmembrane region" description="Helical" evidence="2">
    <location>
        <begin position="464"/>
        <end position="484"/>
    </location>
</feature>
<feature type="transmembrane region" description="Helical" evidence="2">
    <location>
        <begin position="522"/>
        <end position="542"/>
    </location>
</feature>
<feature type="transmembrane region" description="Helical" evidence="2">
    <location>
        <begin position="560"/>
        <end position="580"/>
    </location>
</feature>
<feature type="region of interest" description="Unknown">
    <location>
        <begin position="1"/>
        <end position="317"/>
    </location>
</feature>
<feature type="region of interest" description="Protoheme IX prenyltransferase">
    <location>
        <begin position="318"/>
        <end position="587"/>
    </location>
</feature>
<comment type="function">
    <text evidence="1">Converts heme B (protoheme IX) to heme O by substitution of the vinyl group on carbon 2 of heme B porphyrin ring with a hydroxyethyl farnesyl side group.</text>
</comment>
<comment type="catalytic activity">
    <reaction>
        <text>heme b + (2E,6E)-farnesyl diphosphate + H2O = Fe(II)-heme o + diphosphate</text>
        <dbReference type="Rhea" id="RHEA:28070"/>
        <dbReference type="ChEBI" id="CHEBI:15377"/>
        <dbReference type="ChEBI" id="CHEBI:33019"/>
        <dbReference type="ChEBI" id="CHEBI:60344"/>
        <dbReference type="ChEBI" id="CHEBI:60530"/>
        <dbReference type="ChEBI" id="CHEBI:175763"/>
        <dbReference type="EC" id="2.5.1.141"/>
    </reaction>
</comment>
<comment type="pathway">
    <text>Porphyrin-containing compound metabolism; heme O biosynthesis; heme O from protoheme: step 1/1.</text>
</comment>
<comment type="subcellular location">
    <subcellularLocation>
        <location evidence="3">Cell membrane</location>
        <topology evidence="3">Multi-pass membrane protein</topology>
    </subcellularLocation>
</comment>
<comment type="miscellaneous">
    <text evidence="1">Carbon 2 of the heme B porphyrin ring is defined according to the Fischer nomenclature.</text>
</comment>
<comment type="similarity">
    <text evidence="3">In the C-terminal section; belongs to the UbiA prenyltransferase family. Protoheme IX farnesyltransferase subfamily.</text>
</comment>
<gene>
    <name type="primary">ctaB</name>
    <name type="ordered locus">Caur_0029</name>
</gene>